<gene>
    <name evidence="1" type="primary">groES</name>
    <name evidence="1" type="synonym">groS</name>
    <name type="ordered locus">CPF_2574</name>
</gene>
<sequence length="94" mass="10308">MSIKPLGDRVVIKRLEAEETTKSGIIVTGTAKERPQEAEVVAVGPGAIVDGKRTEMEVKIGDKVLYSKYAGTEVKFEGEEYTILRQDDILAIVE</sequence>
<reference key="1">
    <citation type="journal article" date="2006" name="Genome Res.">
        <title>Skewed genomic variability in strains of the toxigenic bacterial pathogen, Clostridium perfringens.</title>
        <authorList>
            <person name="Myers G.S.A."/>
            <person name="Rasko D.A."/>
            <person name="Cheung J.K."/>
            <person name="Ravel J."/>
            <person name="Seshadri R."/>
            <person name="DeBoy R.T."/>
            <person name="Ren Q."/>
            <person name="Varga J."/>
            <person name="Awad M.M."/>
            <person name="Brinkac L.M."/>
            <person name="Daugherty S.C."/>
            <person name="Haft D.H."/>
            <person name="Dodson R.J."/>
            <person name="Madupu R."/>
            <person name="Nelson W.C."/>
            <person name="Rosovitz M.J."/>
            <person name="Sullivan S.A."/>
            <person name="Khouri H."/>
            <person name="Dimitrov G.I."/>
            <person name="Watkins K.L."/>
            <person name="Mulligan S."/>
            <person name="Benton J."/>
            <person name="Radune D."/>
            <person name="Fisher D.J."/>
            <person name="Atkins H.S."/>
            <person name="Hiscox T."/>
            <person name="Jost B.H."/>
            <person name="Billington S.J."/>
            <person name="Songer J.G."/>
            <person name="McClane B.A."/>
            <person name="Titball R.W."/>
            <person name="Rood J.I."/>
            <person name="Melville S.B."/>
            <person name="Paulsen I.T."/>
        </authorList>
    </citation>
    <scope>NUCLEOTIDE SEQUENCE [LARGE SCALE GENOMIC DNA]</scope>
    <source>
        <strain>ATCC 13124 / DSM 756 / JCM 1290 / NCIMB 6125 / NCTC 8237 / S 107 / Type A</strain>
    </source>
</reference>
<evidence type="ECO:0000255" key="1">
    <source>
        <dbReference type="HAMAP-Rule" id="MF_00580"/>
    </source>
</evidence>
<keyword id="KW-0143">Chaperone</keyword>
<keyword id="KW-0963">Cytoplasm</keyword>
<dbReference type="EMBL" id="CP000246">
    <property type="protein sequence ID" value="ABG83675.1"/>
    <property type="molecule type" value="Genomic_DNA"/>
</dbReference>
<dbReference type="RefSeq" id="WP_003454296.1">
    <property type="nucleotide sequence ID" value="NC_008261.1"/>
</dbReference>
<dbReference type="SMR" id="Q0TN26"/>
<dbReference type="STRING" id="195103.CPF_2574"/>
<dbReference type="PaxDb" id="195103-CPF_2574"/>
<dbReference type="GeneID" id="93001147"/>
<dbReference type="KEGG" id="cpf:CPF_2574"/>
<dbReference type="eggNOG" id="COG0234">
    <property type="taxonomic scope" value="Bacteria"/>
</dbReference>
<dbReference type="HOGENOM" id="CLU_132825_2_0_9"/>
<dbReference type="Proteomes" id="UP000001823">
    <property type="component" value="Chromosome"/>
</dbReference>
<dbReference type="GO" id="GO:0005737">
    <property type="term" value="C:cytoplasm"/>
    <property type="evidence" value="ECO:0007669"/>
    <property type="project" value="UniProtKB-SubCell"/>
</dbReference>
<dbReference type="GO" id="GO:0005524">
    <property type="term" value="F:ATP binding"/>
    <property type="evidence" value="ECO:0007669"/>
    <property type="project" value="InterPro"/>
</dbReference>
<dbReference type="GO" id="GO:0046872">
    <property type="term" value="F:metal ion binding"/>
    <property type="evidence" value="ECO:0007669"/>
    <property type="project" value="TreeGrafter"/>
</dbReference>
<dbReference type="GO" id="GO:0044183">
    <property type="term" value="F:protein folding chaperone"/>
    <property type="evidence" value="ECO:0007669"/>
    <property type="project" value="InterPro"/>
</dbReference>
<dbReference type="GO" id="GO:0051087">
    <property type="term" value="F:protein-folding chaperone binding"/>
    <property type="evidence" value="ECO:0007669"/>
    <property type="project" value="TreeGrafter"/>
</dbReference>
<dbReference type="GO" id="GO:0051082">
    <property type="term" value="F:unfolded protein binding"/>
    <property type="evidence" value="ECO:0007669"/>
    <property type="project" value="TreeGrafter"/>
</dbReference>
<dbReference type="GO" id="GO:0051085">
    <property type="term" value="P:chaperone cofactor-dependent protein refolding"/>
    <property type="evidence" value="ECO:0007669"/>
    <property type="project" value="TreeGrafter"/>
</dbReference>
<dbReference type="CDD" id="cd00320">
    <property type="entry name" value="cpn10"/>
    <property type="match status" value="1"/>
</dbReference>
<dbReference type="FunFam" id="2.30.33.40:FF:000001">
    <property type="entry name" value="10 kDa chaperonin"/>
    <property type="match status" value="1"/>
</dbReference>
<dbReference type="Gene3D" id="2.30.33.40">
    <property type="entry name" value="GroES chaperonin"/>
    <property type="match status" value="1"/>
</dbReference>
<dbReference type="HAMAP" id="MF_00580">
    <property type="entry name" value="CH10"/>
    <property type="match status" value="1"/>
</dbReference>
<dbReference type="InterPro" id="IPR020818">
    <property type="entry name" value="Chaperonin_GroES"/>
</dbReference>
<dbReference type="InterPro" id="IPR037124">
    <property type="entry name" value="Chaperonin_GroES_sf"/>
</dbReference>
<dbReference type="InterPro" id="IPR018369">
    <property type="entry name" value="Chaprnonin_Cpn10_CS"/>
</dbReference>
<dbReference type="InterPro" id="IPR011032">
    <property type="entry name" value="GroES-like_sf"/>
</dbReference>
<dbReference type="NCBIfam" id="NF001530">
    <property type="entry name" value="PRK00364.1-6"/>
    <property type="match status" value="1"/>
</dbReference>
<dbReference type="NCBIfam" id="NF001531">
    <property type="entry name" value="PRK00364.2-2"/>
    <property type="match status" value="1"/>
</dbReference>
<dbReference type="NCBIfam" id="NF001533">
    <property type="entry name" value="PRK00364.2-4"/>
    <property type="match status" value="1"/>
</dbReference>
<dbReference type="NCBIfam" id="NF001534">
    <property type="entry name" value="PRK00364.2-5"/>
    <property type="match status" value="1"/>
</dbReference>
<dbReference type="PANTHER" id="PTHR10772">
    <property type="entry name" value="10 KDA HEAT SHOCK PROTEIN"/>
    <property type="match status" value="1"/>
</dbReference>
<dbReference type="PANTHER" id="PTHR10772:SF58">
    <property type="entry name" value="CO-CHAPERONIN GROES"/>
    <property type="match status" value="1"/>
</dbReference>
<dbReference type="Pfam" id="PF00166">
    <property type="entry name" value="Cpn10"/>
    <property type="match status" value="1"/>
</dbReference>
<dbReference type="PRINTS" id="PR00297">
    <property type="entry name" value="CHAPERONIN10"/>
</dbReference>
<dbReference type="SMART" id="SM00883">
    <property type="entry name" value="Cpn10"/>
    <property type="match status" value="1"/>
</dbReference>
<dbReference type="SUPFAM" id="SSF50129">
    <property type="entry name" value="GroES-like"/>
    <property type="match status" value="1"/>
</dbReference>
<dbReference type="PROSITE" id="PS00681">
    <property type="entry name" value="CHAPERONINS_CPN10"/>
    <property type="match status" value="1"/>
</dbReference>
<accession>Q0TN26</accession>
<organism>
    <name type="scientific">Clostridium perfringens (strain ATCC 13124 / DSM 756 / JCM 1290 / NCIMB 6125 / NCTC 8237 / Type A)</name>
    <dbReference type="NCBI Taxonomy" id="195103"/>
    <lineage>
        <taxon>Bacteria</taxon>
        <taxon>Bacillati</taxon>
        <taxon>Bacillota</taxon>
        <taxon>Clostridia</taxon>
        <taxon>Eubacteriales</taxon>
        <taxon>Clostridiaceae</taxon>
        <taxon>Clostridium</taxon>
    </lineage>
</organism>
<protein>
    <recommendedName>
        <fullName evidence="1">Co-chaperonin GroES</fullName>
    </recommendedName>
    <alternativeName>
        <fullName evidence="1">10 kDa chaperonin</fullName>
    </alternativeName>
    <alternativeName>
        <fullName evidence="1">Chaperonin-10</fullName>
        <shortName evidence="1">Cpn10</shortName>
    </alternativeName>
</protein>
<feature type="chain" id="PRO_1000025241" description="Co-chaperonin GroES">
    <location>
        <begin position="1"/>
        <end position="94"/>
    </location>
</feature>
<name>CH10_CLOP1</name>
<proteinExistence type="inferred from homology"/>
<comment type="function">
    <text evidence="1">Together with the chaperonin GroEL, plays an essential role in assisting protein folding. The GroEL-GroES system forms a nano-cage that allows encapsulation of the non-native substrate proteins and provides a physical environment optimized to promote and accelerate protein folding. GroES binds to the apical surface of the GroEL ring, thereby capping the opening of the GroEL channel.</text>
</comment>
<comment type="subunit">
    <text evidence="1">Heptamer of 7 subunits arranged in a ring. Interacts with the chaperonin GroEL.</text>
</comment>
<comment type="subcellular location">
    <subcellularLocation>
        <location evidence="1">Cytoplasm</location>
    </subcellularLocation>
</comment>
<comment type="similarity">
    <text evidence="1">Belongs to the GroES chaperonin family.</text>
</comment>